<sequence length="592" mass="67874">MGEQLNGLKRTHMCGELTVEDVDKSVVVMGWVQRRRDHGGLVFIDLRDRTGIVQVVFSNEVSSEAFEKVQSVRSEYVLAIEGKVVKRAPENVNPKISTGEIEIYANTLKILSKSETPPFPIEDRSNVSEAIRLKYRYLDLRRPSMQQNLMTRFKITKVVRDFLNRNGFIEIETPLLIKSTPEGARDYLVPSRIYPGKFYALPQSPQIFKQLLMISGFDKYYQIAKCLRDEDLRADRQPEFTQIDIEMSFVEVEDVLKINEKMIAEIFKETLGIDVPIPFKRLSYQESMERFGTDKPDLRFGMELKDLSDIVAQSEFNVFKTALKNNGSVRGINVKGAASMPRRQLDELVEFAKTYGAKGLLWIQVFEKEVKSPATKFLSEEEMKKILERLEAEAGDLLLIVADKDEIVFDTLAHLRLELGKRFNLIDENKYEFVWIVDFPLLEYDEGEKRYVAKHHPFTAPKDEDIELLEKEPLKVRAKAYDIVLNGTEIGGGSIRIHDTELQKRMFKVLGFSEEKAWERFGFLMEAFKYGAPPHGGIAYGLDRLAMIITGSDTIRDVIAFPKTQNAVCLMTDAPSEVSEEQLKELHIKVDL</sequence>
<reference key="1">
    <citation type="submission" date="2008-01" db="EMBL/GenBank/DDBJ databases">
        <title>Complete sequence of Thermoanaerobacter pseudethanolicus 39E.</title>
        <authorList>
            <person name="Copeland A."/>
            <person name="Lucas S."/>
            <person name="Lapidus A."/>
            <person name="Barry K."/>
            <person name="Glavina del Rio T."/>
            <person name="Dalin E."/>
            <person name="Tice H."/>
            <person name="Pitluck S."/>
            <person name="Bruce D."/>
            <person name="Goodwin L."/>
            <person name="Saunders E."/>
            <person name="Brettin T."/>
            <person name="Detter J.C."/>
            <person name="Han C."/>
            <person name="Schmutz J."/>
            <person name="Larimer F."/>
            <person name="Land M."/>
            <person name="Hauser L."/>
            <person name="Kyrpides N."/>
            <person name="Lykidis A."/>
            <person name="Hemme C."/>
            <person name="Fields M.W."/>
            <person name="He Z."/>
            <person name="Zhou J."/>
            <person name="Richardson P."/>
        </authorList>
    </citation>
    <scope>NUCLEOTIDE SEQUENCE [LARGE SCALE GENOMIC DNA]</scope>
    <source>
        <strain>ATCC 33223 / DSM 2355 / 39E</strain>
    </source>
</reference>
<accession>B0K978</accession>
<organism>
    <name type="scientific">Thermoanaerobacter pseudethanolicus (strain ATCC 33223 / 39E)</name>
    <name type="common">Clostridium thermohydrosulfuricum</name>
    <dbReference type="NCBI Taxonomy" id="340099"/>
    <lineage>
        <taxon>Bacteria</taxon>
        <taxon>Bacillati</taxon>
        <taxon>Bacillota</taxon>
        <taxon>Clostridia</taxon>
        <taxon>Thermoanaerobacterales</taxon>
        <taxon>Thermoanaerobacteraceae</taxon>
        <taxon>Thermoanaerobacter</taxon>
    </lineage>
</organism>
<evidence type="ECO:0000255" key="1">
    <source>
        <dbReference type="HAMAP-Rule" id="MF_00044"/>
    </source>
</evidence>
<proteinExistence type="inferred from homology"/>
<feature type="chain" id="PRO_1000091055" description="Aspartate--tRNA(Asp/Asn) ligase">
    <location>
        <begin position="1"/>
        <end position="592"/>
    </location>
</feature>
<feature type="region of interest" description="Aspartate" evidence="1">
    <location>
        <begin position="206"/>
        <end position="209"/>
    </location>
</feature>
<feature type="binding site" evidence="1">
    <location>
        <position position="182"/>
    </location>
    <ligand>
        <name>L-aspartate</name>
        <dbReference type="ChEBI" id="CHEBI:29991"/>
    </ligand>
</feature>
<feature type="binding site" evidence="1">
    <location>
        <begin position="228"/>
        <end position="230"/>
    </location>
    <ligand>
        <name>ATP</name>
        <dbReference type="ChEBI" id="CHEBI:30616"/>
    </ligand>
</feature>
<feature type="binding site" evidence="1">
    <location>
        <position position="228"/>
    </location>
    <ligand>
        <name>L-aspartate</name>
        <dbReference type="ChEBI" id="CHEBI:29991"/>
    </ligand>
</feature>
<feature type="binding site" evidence="1">
    <location>
        <position position="237"/>
    </location>
    <ligand>
        <name>ATP</name>
        <dbReference type="ChEBI" id="CHEBI:30616"/>
    </ligand>
</feature>
<feature type="binding site" evidence="1">
    <location>
        <position position="455"/>
    </location>
    <ligand>
        <name>L-aspartate</name>
        <dbReference type="ChEBI" id="CHEBI:29991"/>
    </ligand>
</feature>
<feature type="binding site" evidence="1">
    <location>
        <position position="489"/>
    </location>
    <ligand>
        <name>ATP</name>
        <dbReference type="ChEBI" id="CHEBI:30616"/>
    </ligand>
</feature>
<feature type="binding site" evidence="1">
    <location>
        <position position="496"/>
    </location>
    <ligand>
        <name>L-aspartate</name>
        <dbReference type="ChEBI" id="CHEBI:29991"/>
    </ligand>
</feature>
<feature type="binding site" evidence="1">
    <location>
        <begin position="541"/>
        <end position="544"/>
    </location>
    <ligand>
        <name>ATP</name>
        <dbReference type="ChEBI" id="CHEBI:30616"/>
    </ligand>
</feature>
<feature type="site" description="Important for tRNA non-discrimination" evidence="1">
    <location>
        <position position="38"/>
    </location>
</feature>
<comment type="function">
    <text evidence="1">Aspartyl-tRNA synthetase with relaxed tRNA specificity since it is able to aspartylate not only its cognate tRNA(Asp) but also tRNA(Asn). Reaction proceeds in two steps: L-aspartate is first activated by ATP to form Asp-AMP and then transferred to the acceptor end of tRNA(Asp/Asn).</text>
</comment>
<comment type="catalytic activity">
    <reaction evidence="1">
        <text>tRNA(Asx) + L-aspartate + ATP = L-aspartyl-tRNA(Asx) + AMP + diphosphate</text>
        <dbReference type="Rhea" id="RHEA:18349"/>
        <dbReference type="Rhea" id="RHEA-COMP:9710"/>
        <dbReference type="Rhea" id="RHEA-COMP:9711"/>
        <dbReference type="ChEBI" id="CHEBI:29991"/>
        <dbReference type="ChEBI" id="CHEBI:30616"/>
        <dbReference type="ChEBI" id="CHEBI:33019"/>
        <dbReference type="ChEBI" id="CHEBI:78442"/>
        <dbReference type="ChEBI" id="CHEBI:78516"/>
        <dbReference type="ChEBI" id="CHEBI:456215"/>
        <dbReference type="EC" id="6.1.1.23"/>
    </reaction>
</comment>
<comment type="subunit">
    <text evidence="1">Homodimer.</text>
</comment>
<comment type="subcellular location">
    <subcellularLocation>
        <location evidence="1">Cytoplasm</location>
    </subcellularLocation>
</comment>
<comment type="similarity">
    <text evidence="1">Belongs to the class-II aminoacyl-tRNA synthetase family. Type 1 subfamily.</text>
</comment>
<keyword id="KW-0030">Aminoacyl-tRNA synthetase</keyword>
<keyword id="KW-0067">ATP-binding</keyword>
<keyword id="KW-0963">Cytoplasm</keyword>
<keyword id="KW-0436">Ligase</keyword>
<keyword id="KW-0547">Nucleotide-binding</keyword>
<keyword id="KW-0648">Protein biosynthesis</keyword>
<keyword id="KW-1185">Reference proteome</keyword>
<protein>
    <recommendedName>
        <fullName evidence="1">Aspartate--tRNA(Asp/Asn) ligase</fullName>
        <ecNumber evidence="1">6.1.1.23</ecNumber>
    </recommendedName>
    <alternativeName>
        <fullName evidence="1">Aspartyl-tRNA synthetase</fullName>
        <shortName evidence="1">AspRS</shortName>
    </alternativeName>
    <alternativeName>
        <fullName evidence="1">Non-discriminating aspartyl-tRNA synthetase</fullName>
        <shortName evidence="1">ND-AspRS</shortName>
    </alternativeName>
</protein>
<name>SYDND_THEP3</name>
<dbReference type="EC" id="6.1.1.23" evidence="1"/>
<dbReference type="EMBL" id="CP000924">
    <property type="protein sequence ID" value="ABY94691.1"/>
    <property type="molecule type" value="Genomic_DNA"/>
</dbReference>
<dbReference type="RefSeq" id="WP_012269285.1">
    <property type="nucleotide sequence ID" value="NC_010321.1"/>
</dbReference>
<dbReference type="SMR" id="B0K978"/>
<dbReference type="STRING" id="340099.Teth39_1036"/>
<dbReference type="KEGG" id="tpd:Teth39_1036"/>
<dbReference type="eggNOG" id="COG0173">
    <property type="taxonomic scope" value="Bacteria"/>
</dbReference>
<dbReference type="HOGENOM" id="CLU_014330_3_2_9"/>
<dbReference type="Proteomes" id="UP000002156">
    <property type="component" value="Chromosome"/>
</dbReference>
<dbReference type="GO" id="GO:0005737">
    <property type="term" value="C:cytoplasm"/>
    <property type="evidence" value="ECO:0007669"/>
    <property type="project" value="UniProtKB-SubCell"/>
</dbReference>
<dbReference type="GO" id="GO:0004815">
    <property type="term" value="F:aspartate-tRNA ligase activity"/>
    <property type="evidence" value="ECO:0007669"/>
    <property type="project" value="UniProtKB-UniRule"/>
</dbReference>
<dbReference type="GO" id="GO:0050560">
    <property type="term" value="F:aspartate-tRNA(Asn) ligase activity"/>
    <property type="evidence" value="ECO:0007669"/>
    <property type="project" value="UniProtKB-EC"/>
</dbReference>
<dbReference type="GO" id="GO:0005524">
    <property type="term" value="F:ATP binding"/>
    <property type="evidence" value="ECO:0007669"/>
    <property type="project" value="UniProtKB-UniRule"/>
</dbReference>
<dbReference type="GO" id="GO:0140096">
    <property type="term" value="F:catalytic activity, acting on a protein"/>
    <property type="evidence" value="ECO:0007669"/>
    <property type="project" value="UniProtKB-ARBA"/>
</dbReference>
<dbReference type="GO" id="GO:0003676">
    <property type="term" value="F:nucleic acid binding"/>
    <property type="evidence" value="ECO:0007669"/>
    <property type="project" value="InterPro"/>
</dbReference>
<dbReference type="GO" id="GO:0016740">
    <property type="term" value="F:transferase activity"/>
    <property type="evidence" value="ECO:0007669"/>
    <property type="project" value="UniProtKB-ARBA"/>
</dbReference>
<dbReference type="GO" id="GO:0006422">
    <property type="term" value="P:aspartyl-tRNA aminoacylation"/>
    <property type="evidence" value="ECO:0007669"/>
    <property type="project" value="UniProtKB-UniRule"/>
</dbReference>
<dbReference type="CDD" id="cd00777">
    <property type="entry name" value="AspRS_core"/>
    <property type="match status" value="1"/>
</dbReference>
<dbReference type="CDD" id="cd04317">
    <property type="entry name" value="EcAspRS_like_N"/>
    <property type="match status" value="1"/>
</dbReference>
<dbReference type="Gene3D" id="3.30.930.10">
    <property type="entry name" value="Bira Bifunctional Protein, Domain 2"/>
    <property type="match status" value="1"/>
</dbReference>
<dbReference type="Gene3D" id="3.30.1360.30">
    <property type="entry name" value="GAD-like domain"/>
    <property type="match status" value="1"/>
</dbReference>
<dbReference type="Gene3D" id="2.40.50.140">
    <property type="entry name" value="Nucleic acid-binding proteins"/>
    <property type="match status" value="1"/>
</dbReference>
<dbReference type="HAMAP" id="MF_00044">
    <property type="entry name" value="Asp_tRNA_synth_type1"/>
    <property type="match status" value="1"/>
</dbReference>
<dbReference type="InterPro" id="IPR004364">
    <property type="entry name" value="Aa-tRNA-synt_II"/>
</dbReference>
<dbReference type="InterPro" id="IPR006195">
    <property type="entry name" value="aa-tRNA-synth_II"/>
</dbReference>
<dbReference type="InterPro" id="IPR045864">
    <property type="entry name" value="aa-tRNA-synth_II/BPL/LPL"/>
</dbReference>
<dbReference type="InterPro" id="IPR004524">
    <property type="entry name" value="Asp-tRNA-ligase_1"/>
</dbReference>
<dbReference type="InterPro" id="IPR047089">
    <property type="entry name" value="Asp-tRNA-ligase_1_N"/>
</dbReference>
<dbReference type="InterPro" id="IPR002312">
    <property type="entry name" value="Asp/Asn-tRNA-synth_IIb"/>
</dbReference>
<dbReference type="InterPro" id="IPR047090">
    <property type="entry name" value="AspRS_core"/>
</dbReference>
<dbReference type="InterPro" id="IPR004115">
    <property type="entry name" value="GAD-like_sf"/>
</dbReference>
<dbReference type="InterPro" id="IPR029351">
    <property type="entry name" value="GAD_dom"/>
</dbReference>
<dbReference type="InterPro" id="IPR012340">
    <property type="entry name" value="NA-bd_OB-fold"/>
</dbReference>
<dbReference type="InterPro" id="IPR004365">
    <property type="entry name" value="NA-bd_OB_tRNA"/>
</dbReference>
<dbReference type="NCBIfam" id="TIGR00459">
    <property type="entry name" value="aspS_bact"/>
    <property type="match status" value="1"/>
</dbReference>
<dbReference type="NCBIfam" id="NF001750">
    <property type="entry name" value="PRK00476.1"/>
    <property type="match status" value="1"/>
</dbReference>
<dbReference type="PANTHER" id="PTHR22594:SF5">
    <property type="entry name" value="ASPARTATE--TRNA LIGASE, MITOCHONDRIAL"/>
    <property type="match status" value="1"/>
</dbReference>
<dbReference type="PANTHER" id="PTHR22594">
    <property type="entry name" value="ASPARTYL/LYSYL-TRNA SYNTHETASE"/>
    <property type="match status" value="1"/>
</dbReference>
<dbReference type="Pfam" id="PF02938">
    <property type="entry name" value="GAD"/>
    <property type="match status" value="1"/>
</dbReference>
<dbReference type="Pfam" id="PF00152">
    <property type="entry name" value="tRNA-synt_2"/>
    <property type="match status" value="1"/>
</dbReference>
<dbReference type="Pfam" id="PF01336">
    <property type="entry name" value="tRNA_anti-codon"/>
    <property type="match status" value="1"/>
</dbReference>
<dbReference type="PRINTS" id="PR01042">
    <property type="entry name" value="TRNASYNTHASP"/>
</dbReference>
<dbReference type="SUPFAM" id="SSF55681">
    <property type="entry name" value="Class II aaRS and biotin synthetases"/>
    <property type="match status" value="1"/>
</dbReference>
<dbReference type="SUPFAM" id="SSF55261">
    <property type="entry name" value="GAD domain-like"/>
    <property type="match status" value="1"/>
</dbReference>
<dbReference type="SUPFAM" id="SSF50249">
    <property type="entry name" value="Nucleic acid-binding proteins"/>
    <property type="match status" value="1"/>
</dbReference>
<dbReference type="PROSITE" id="PS50862">
    <property type="entry name" value="AA_TRNA_LIGASE_II"/>
    <property type="match status" value="1"/>
</dbReference>
<gene>
    <name evidence="1" type="primary">aspS</name>
    <name type="ordered locus">Teth39_1036</name>
</gene>